<proteinExistence type="inferred from homology"/>
<geneLocation type="plasmid">
    <name>sym pNGR234a</name>
</geneLocation>
<protein>
    <recommendedName>
        <fullName>Putative insertion sequence ATP-binding protein y4pL</fullName>
    </recommendedName>
</protein>
<dbReference type="EMBL" id="U00090">
    <property type="protein sequence ID" value="AAB91822.1"/>
    <property type="molecule type" value="Genomic_DNA"/>
</dbReference>
<dbReference type="RefSeq" id="NP_444025.1">
    <property type="nucleotide sequence ID" value="NC_000914.2"/>
</dbReference>
<dbReference type="RefSeq" id="WP_010875234.1">
    <property type="nucleotide sequence ID" value="NC_000914.2"/>
</dbReference>
<dbReference type="SMR" id="P55617"/>
<dbReference type="STRING" id="394.NGR_c22440"/>
<dbReference type="KEGG" id="rhi:NGR_a02000"/>
<dbReference type="PATRIC" id="fig|394.7.peg.205"/>
<dbReference type="eggNOG" id="COG1484">
    <property type="taxonomic scope" value="Bacteria"/>
</dbReference>
<dbReference type="HOGENOM" id="CLU_062999_7_0_5"/>
<dbReference type="OrthoDB" id="8150723at2"/>
<dbReference type="Proteomes" id="UP000001054">
    <property type="component" value="Plasmid pNGR234a"/>
</dbReference>
<dbReference type="GO" id="GO:0005524">
    <property type="term" value="F:ATP binding"/>
    <property type="evidence" value="ECO:0007669"/>
    <property type="project" value="UniProtKB-KW"/>
</dbReference>
<dbReference type="GO" id="GO:0016887">
    <property type="term" value="F:ATP hydrolysis activity"/>
    <property type="evidence" value="ECO:0007669"/>
    <property type="project" value="InterPro"/>
</dbReference>
<dbReference type="GO" id="GO:0006260">
    <property type="term" value="P:DNA replication"/>
    <property type="evidence" value="ECO:0007669"/>
    <property type="project" value="TreeGrafter"/>
</dbReference>
<dbReference type="CDD" id="cd00009">
    <property type="entry name" value="AAA"/>
    <property type="match status" value="1"/>
</dbReference>
<dbReference type="FunFam" id="3.40.50.300:FF:001361">
    <property type="entry name" value="AAA family ATPase"/>
    <property type="match status" value="1"/>
</dbReference>
<dbReference type="Gene3D" id="3.40.50.300">
    <property type="entry name" value="P-loop containing nucleotide triphosphate hydrolases"/>
    <property type="match status" value="1"/>
</dbReference>
<dbReference type="InterPro" id="IPR003593">
    <property type="entry name" value="AAA+_ATPase"/>
</dbReference>
<dbReference type="InterPro" id="IPR028350">
    <property type="entry name" value="DNAC/IstB-like"/>
</dbReference>
<dbReference type="InterPro" id="IPR047661">
    <property type="entry name" value="IstB"/>
</dbReference>
<dbReference type="InterPro" id="IPR002611">
    <property type="entry name" value="IstB_ATP-bd"/>
</dbReference>
<dbReference type="InterPro" id="IPR027417">
    <property type="entry name" value="P-loop_NTPase"/>
</dbReference>
<dbReference type="NCBIfam" id="NF038214">
    <property type="entry name" value="IS21_help_AAA"/>
    <property type="match status" value="1"/>
</dbReference>
<dbReference type="PANTHER" id="PTHR30050:SF4">
    <property type="entry name" value="ATP-BINDING PROTEIN RV3427C IN INSERTION SEQUENCE-RELATED"/>
    <property type="match status" value="1"/>
</dbReference>
<dbReference type="PANTHER" id="PTHR30050">
    <property type="entry name" value="CHROMOSOMAL REPLICATION INITIATOR PROTEIN DNAA"/>
    <property type="match status" value="1"/>
</dbReference>
<dbReference type="Pfam" id="PF01695">
    <property type="entry name" value="IstB_IS21"/>
    <property type="match status" value="1"/>
</dbReference>
<dbReference type="PIRSF" id="PIRSF003073">
    <property type="entry name" value="DNAC_TnpB_IstB"/>
    <property type="match status" value="1"/>
</dbReference>
<dbReference type="SMART" id="SM00382">
    <property type="entry name" value="AAA"/>
    <property type="match status" value="1"/>
</dbReference>
<dbReference type="SUPFAM" id="SSF52540">
    <property type="entry name" value="P-loop containing nucleoside triphosphate hydrolases"/>
    <property type="match status" value="1"/>
</dbReference>
<keyword id="KW-0067">ATP-binding</keyword>
<keyword id="KW-0547">Nucleotide-binding</keyword>
<keyword id="KW-0614">Plasmid</keyword>
<keyword id="KW-1185">Reference proteome</keyword>
<keyword id="KW-0814">Transposable element</keyword>
<accession>P55617</accession>
<gene>
    <name type="ordered locus">NGR_a02000</name>
    <name type="ORF">y4pL</name>
</gene>
<sequence>MLAHPTLDKLNTMGLTGMAKAFSELISNGESEQLSHAEWLGLLLEREWSWRYDRKLAARLRFAKLRHQAVPEDVDYRSERGLDRALFMKLIGGDWIDAHDNLAICGPSGVGKSWLACALGHKACRDDRSVLYQRVPRLFANLALARGDGRYARLQRTLGHVQLLILDDWGLEPLNEQARHDLLEILEDRYGRRSTIITSQLPVSAWHEIIGNPTYADAILDRLVHNAHRIDLSGESLRRNQRRKS</sequence>
<comment type="similarity">
    <text evidence="2">Belongs to the IS21/IS1162 putative ATP-binding protein family.</text>
</comment>
<evidence type="ECO:0000255" key="1"/>
<evidence type="ECO:0000305" key="2"/>
<name>Y4PL_SINFN</name>
<reference key="1">
    <citation type="journal article" date="1997" name="Nature">
        <title>Molecular basis of symbiosis between Rhizobium and legumes.</title>
        <authorList>
            <person name="Freiberg C.A."/>
            <person name="Fellay R."/>
            <person name="Bairoch A."/>
            <person name="Broughton W.J."/>
            <person name="Rosenthal A."/>
            <person name="Perret X."/>
        </authorList>
    </citation>
    <scope>NUCLEOTIDE SEQUENCE [LARGE SCALE GENOMIC DNA]</scope>
    <source>
        <strain>NBRC 101917 / NGR234</strain>
    </source>
</reference>
<reference key="2">
    <citation type="journal article" date="2009" name="Appl. Environ. Microbiol.">
        <title>Rhizobium sp. strain NGR234 possesses a remarkable number of secretion systems.</title>
        <authorList>
            <person name="Schmeisser C."/>
            <person name="Liesegang H."/>
            <person name="Krysciak D."/>
            <person name="Bakkou N."/>
            <person name="Le Quere A."/>
            <person name="Wollherr A."/>
            <person name="Heinemeyer I."/>
            <person name="Morgenstern B."/>
            <person name="Pommerening-Roeser A."/>
            <person name="Flores M."/>
            <person name="Palacios R."/>
            <person name="Brenner S."/>
            <person name="Gottschalk G."/>
            <person name="Schmitz R.A."/>
            <person name="Broughton W.J."/>
            <person name="Perret X."/>
            <person name="Strittmatter A.W."/>
            <person name="Streit W.R."/>
        </authorList>
    </citation>
    <scope>NUCLEOTIDE SEQUENCE [LARGE SCALE GENOMIC DNA]</scope>
    <source>
        <strain>NBRC 101917 / NGR234</strain>
    </source>
</reference>
<organism>
    <name type="scientific">Sinorhizobium fredii (strain NBRC 101917 / NGR234)</name>
    <dbReference type="NCBI Taxonomy" id="394"/>
    <lineage>
        <taxon>Bacteria</taxon>
        <taxon>Pseudomonadati</taxon>
        <taxon>Pseudomonadota</taxon>
        <taxon>Alphaproteobacteria</taxon>
        <taxon>Hyphomicrobiales</taxon>
        <taxon>Rhizobiaceae</taxon>
        <taxon>Sinorhizobium/Ensifer group</taxon>
        <taxon>Sinorhizobium</taxon>
    </lineage>
</organism>
<feature type="chain" id="PRO_0000075484" description="Putative insertion sequence ATP-binding protein y4pL">
    <location>
        <begin position="1"/>
        <end position="245"/>
    </location>
</feature>
<feature type="binding site" evidence="1">
    <location>
        <begin position="106"/>
        <end position="113"/>
    </location>
    <ligand>
        <name>ATP</name>
        <dbReference type="ChEBI" id="CHEBI:30616"/>
    </ligand>
</feature>